<dbReference type="EMBL" id="AY665259">
    <property type="protein sequence ID" value="AAV74297.1"/>
    <property type="status" value="ALT_SEQ"/>
    <property type="molecule type" value="mRNA"/>
</dbReference>
<dbReference type="RefSeq" id="NP_001103711.1">
    <property type="nucleotide sequence ID" value="NM_001110241.1"/>
</dbReference>
<dbReference type="BMRB" id="Q5IS69"/>
<dbReference type="SMR" id="Q5IS69"/>
<dbReference type="FunCoup" id="Q5IS69">
    <property type="interactions" value="1177"/>
</dbReference>
<dbReference type="STRING" id="9598.ENSPTRP00000067812"/>
<dbReference type="PaxDb" id="9598-ENSPTRP00000028196"/>
<dbReference type="GeneID" id="641462"/>
<dbReference type="KEGG" id="ptr:641462"/>
<dbReference type="CTD" id="2247"/>
<dbReference type="eggNOG" id="KOG3885">
    <property type="taxonomic scope" value="Eukaryota"/>
</dbReference>
<dbReference type="InParanoid" id="Q5IS69"/>
<dbReference type="OrthoDB" id="14710at9604"/>
<dbReference type="Proteomes" id="UP000002277">
    <property type="component" value="Unplaced"/>
</dbReference>
<dbReference type="GO" id="GO:0005737">
    <property type="term" value="C:cytoplasm"/>
    <property type="evidence" value="ECO:0000318"/>
    <property type="project" value="GO_Central"/>
</dbReference>
<dbReference type="GO" id="GO:0005615">
    <property type="term" value="C:extracellular space"/>
    <property type="evidence" value="ECO:0000318"/>
    <property type="project" value="GO_Central"/>
</dbReference>
<dbReference type="GO" id="GO:0005634">
    <property type="term" value="C:nucleus"/>
    <property type="evidence" value="ECO:0000318"/>
    <property type="project" value="GO_Central"/>
</dbReference>
<dbReference type="GO" id="GO:0005104">
    <property type="term" value="F:fibroblast growth factor receptor binding"/>
    <property type="evidence" value="ECO:0000318"/>
    <property type="project" value="GO_Central"/>
</dbReference>
<dbReference type="GO" id="GO:0008083">
    <property type="term" value="F:growth factor activity"/>
    <property type="evidence" value="ECO:0000318"/>
    <property type="project" value="GO_Central"/>
</dbReference>
<dbReference type="GO" id="GO:0008201">
    <property type="term" value="F:heparin binding"/>
    <property type="evidence" value="ECO:0007669"/>
    <property type="project" value="UniProtKB-KW"/>
</dbReference>
<dbReference type="GO" id="GO:0005178">
    <property type="term" value="F:integrin binding"/>
    <property type="evidence" value="ECO:0000250"/>
    <property type="project" value="UniProtKB"/>
</dbReference>
<dbReference type="GO" id="GO:0001525">
    <property type="term" value="P:angiogenesis"/>
    <property type="evidence" value="ECO:0007669"/>
    <property type="project" value="UniProtKB-KW"/>
</dbReference>
<dbReference type="GO" id="GO:0001658">
    <property type="term" value="P:branching involved in ureteric bud morphogenesis"/>
    <property type="evidence" value="ECO:0000250"/>
    <property type="project" value="UniProtKB"/>
</dbReference>
<dbReference type="GO" id="GO:0008543">
    <property type="term" value="P:fibroblast growth factor receptor signaling pathway"/>
    <property type="evidence" value="ECO:0000318"/>
    <property type="project" value="GO_Central"/>
</dbReference>
<dbReference type="GO" id="GO:0014843">
    <property type="term" value="P:growth factor dependent regulation of skeletal muscle satellite cell proliferation"/>
    <property type="evidence" value="ECO:0000250"/>
    <property type="project" value="AgBase"/>
</dbReference>
<dbReference type="GO" id="GO:0022008">
    <property type="term" value="P:neurogenesis"/>
    <property type="evidence" value="ECO:0000318"/>
    <property type="project" value="GO_Central"/>
</dbReference>
<dbReference type="GO" id="GO:0045766">
    <property type="term" value="P:positive regulation of angiogenesis"/>
    <property type="evidence" value="ECO:0000250"/>
    <property type="project" value="UniProtKB"/>
</dbReference>
<dbReference type="GO" id="GO:0043536">
    <property type="term" value="P:positive regulation of blood vessel endothelial cell migration"/>
    <property type="evidence" value="ECO:0000250"/>
    <property type="project" value="UniProtKB"/>
</dbReference>
<dbReference type="GO" id="GO:0051781">
    <property type="term" value="P:positive regulation of cell division"/>
    <property type="evidence" value="ECO:0007669"/>
    <property type="project" value="UniProtKB-KW"/>
</dbReference>
<dbReference type="GO" id="GO:0090050">
    <property type="term" value="P:positive regulation of cell migration involved in sprouting angiogenesis"/>
    <property type="evidence" value="ECO:0000250"/>
    <property type="project" value="UniProtKB"/>
</dbReference>
<dbReference type="GO" id="GO:0008284">
    <property type="term" value="P:positive regulation of cell population proliferation"/>
    <property type="evidence" value="ECO:0000318"/>
    <property type="project" value="GO_Central"/>
</dbReference>
<dbReference type="GO" id="GO:0070374">
    <property type="term" value="P:positive regulation of ERK1 and ERK2 cascade"/>
    <property type="evidence" value="ECO:0000250"/>
    <property type="project" value="UniProtKB"/>
</dbReference>
<dbReference type="GO" id="GO:1902748">
    <property type="term" value="P:positive regulation of lens fiber cell differentiation"/>
    <property type="evidence" value="ECO:0000250"/>
    <property type="project" value="UniProtKB"/>
</dbReference>
<dbReference type="GO" id="GO:0043410">
    <property type="term" value="P:positive regulation of MAPK cascade"/>
    <property type="evidence" value="ECO:0000318"/>
    <property type="project" value="GO_Central"/>
</dbReference>
<dbReference type="GO" id="GO:0001934">
    <property type="term" value="P:positive regulation of protein phosphorylation"/>
    <property type="evidence" value="ECO:0000250"/>
    <property type="project" value="UniProtKB"/>
</dbReference>
<dbReference type="GO" id="GO:1903672">
    <property type="term" value="P:positive regulation of sprouting angiogenesis"/>
    <property type="evidence" value="ECO:0000250"/>
    <property type="project" value="UniProtKB"/>
</dbReference>
<dbReference type="GO" id="GO:0030334">
    <property type="term" value="P:regulation of cell migration"/>
    <property type="evidence" value="ECO:0000318"/>
    <property type="project" value="GO_Central"/>
</dbReference>
<dbReference type="CDD" id="cd23314">
    <property type="entry name" value="beta-trefoil_FGF2"/>
    <property type="match status" value="1"/>
</dbReference>
<dbReference type="FunFam" id="2.80.10.50:FF:000020">
    <property type="entry name" value="Fibroblast growth factor 1"/>
    <property type="match status" value="1"/>
</dbReference>
<dbReference type="Gene3D" id="2.80.10.50">
    <property type="match status" value="1"/>
</dbReference>
<dbReference type="InterPro" id="IPR002209">
    <property type="entry name" value="Fibroblast_GF_fam"/>
</dbReference>
<dbReference type="InterPro" id="IPR008996">
    <property type="entry name" value="IL1/FGF"/>
</dbReference>
<dbReference type="PANTHER" id="PTHR11486">
    <property type="entry name" value="FIBROBLAST GROWTH FACTOR"/>
    <property type="match status" value="1"/>
</dbReference>
<dbReference type="Pfam" id="PF00167">
    <property type="entry name" value="FGF"/>
    <property type="match status" value="1"/>
</dbReference>
<dbReference type="PRINTS" id="PR00263">
    <property type="entry name" value="HBGFFGF"/>
</dbReference>
<dbReference type="PRINTS" id="PR00262">
    <property type="entry name" value="IL1HBGF"/>
</dbReference>
<dbReference type="SMART" id="SM00442">
    <property type="entry name" value="FGF"/>
    <property type="match status" value="1"/>
</dbReference>
<dbReference type="SUPFAM" id="SSF50353">
    <property type="entry name" value="Cytokine"/>
    <property type="match status" value="1"/>
</dbReference>
<dbReference type="PROSITE" id="PS00247">
    <property type="entry name" value="HBGF_FGF"/>
    <property type="match status" value="1"/>
</dbReference>
<name>FGF2_PANTR</name>
<gene>
    <name evidence="3" type="primary">FGF2</name>
</gene>
<reference evidence="10" key="1">
    <citation type="journal article" date="2004" name="Cell">
        <title>Accelerated evolution of nervous system genes in the origin of Homo sapiens.</title>
        <authorList>
            <person name="Dorus S."/>
            <person name="Vallender E.J."/>
            <person name="Evans P.D."/>
            <person name="Anderson J.R."/>
            <person name="Gilbert S.L."/>
            <person name="Mahowald M."/>
            <person name="Wyckoff G.J."/>
            <person name="Malcom C.M."/>
            <person name="Lahn B.T."/>
        </authorList>
    </citation>
    <scope>NUCLEOTIDE SEQUENCE [MRNA]</scope>
</reference>
<feature type="propeptide" id="PRO_0000386593" evidence="3">
    <location>
        <begin position="1"/>
        <end position="142"/>
    </location>
</feature>
<feature type="chain" id="PRO_0000386594" description="Fibroblast growth factor 2">
    <location>
        <begin position="143"/>
        <end position="288"/>
    </location>
</feature>
<feature type="region of interest" description="Disordered" evidence="8">
    <location>
        <begin position="1"/>
        <end position="156"/>
    </location>
</feature>
<feature type="region of interest" description="Heparin-binding" evidence="2">
    <location>
        <begin position="261"/>
        <end position="277"/>
    </location>
</feature>
<feature type="short sequence motif" description="Cell attachment site; atypical" evidence="7">
    <location>
        <begin position="179"/>
        <end position="181"/>
    </location>
</feature>
<feature type="short sequence motif" description="Cell attachment site; atypical" evidence="7">
    <location>
        <begin position="221"/>
        <end position="223"/>
    </location>
</feature>
<feature type="compositionally biased region" description="Basic and acidic residues" evidence="8">
    <location>
        <begin position="72"/>
        <end position="84"/>
    </location>
</feature>
<feature type="compositionally biased region" description="Low complexity" evidence="8">
    <location>
        <begin position="113"/>
        <end position="132"/>
    </location>
</feature>
<feature type="binding site" evidence="2">
    <location>
        <position position="169"/>
    </location>
    <ligand>
        <name>heparin</name>
        <dbReference type="ChEBI" id="CHEBI:28304"/>
    </ligand>
</feature>
<feature type="site" description="Important for interaction with integrin" evidence="3">
    <location>
        <position position="261"/>
    </location>
</feature>
<feature type="site" description="Important for interaction with integrin" evidence="3">
    <location>
        <position position="262"/>
    </location>
</feature>
<feature type="site" description="Important for interaction with integrin" evidence="3">
    <location>
        <position position="267"/>
    </location>
</feature>
<feature type="modified residue" description="Omega-N-methylarginine; alternate" evidence="6">
    <location>
        <position position="108"/>
    </location>
</feature>
<feature type="modified residue" description="Symmetric dimethylarginine; alternate" evidence="6">
    <location>
        <position position="108"/>
    </location>
</feature>
<feature type="modified residue" description="Omega-N-methylarginine; alternate" evidence="6">
    <location>
        <position position="110"/>
    </location>
</feature>
<feature type="modified residue" description="Symmetric dimethylarginine; alternate" evidence="6">
    <location>
        <position position="110"/>
    </location>
</feature>
<feature type="modified residue" description="Omega-N-methylarginine; alternate" evidence="6">
    <location>
        <position position="112"/>
    </location>
</feature>
<feature type="modified residue" description="Symmetric dimethylarginine; alternate" evidence="6">
    <location>
        <position position="112"/>
    </location>
</feature>
<feature type="modified residue" description="Phosphotyrosine; by TEC" evidence="3">
    <location>
        <position position="215"/>
    </location>
</feature>
<feature type="cross-link" description="Glycyl lysine isopeptide (Lys-Gly) (interchain with G-Cter in SUMO1)" evidence="3">
    <location>
        <position position="228"/>
    </location>
</feature>
<keyword id="KW-0037">Angiogenesis</keyword>
<keyword id="KW-0217">Developmental protein</keyword>
<keyword id="KW-0221">Differentiation</keyword>
<keyword id="KW-0339">Growth factor</keyword>
<keyword id="KW-0358">Heparin-binding</keyword>
<keyword id="KW-1017">Isopeptide bond</keyword>
<keyword id="KW-0488">Methylation</keyword>
<keyword id="KW-0497">Mitogen</keyword>
<keyword id="KW-0539">Nucleus</keyword>
<keyword id="KW-0597">Phosphoprotein</keyword>
<keyword id="KW-1185">Reference proteome</keyword>
<keyword id="KW-0964">Secreted</keyword>
<keyword id="KW-0832">Ubl conjugation</keyword>
<sequence length="288" mass="30736">MVGVGGGDVEDVTPRPGGCQISGRGARGCNGIPGAAAWEAALPRRRPRRHPSVNPRSRAAGSPRTRGRRTKERPSGSRLGDHGRGRALPGGRVGGRGRGRAPERVGGRGRGRGTAAPRAAPAARGSRPGPAGTMAAGSITTLPALPEDGGSGAFPPGHFKDPKRLYCKNGGFFLRIHPDGRVDGVREKSDPHIKLQLQAEERGVVSIKGVCANRYLAMKEDGRLLASKCVTDECFFFERLESNNYNTYRSRKYTSWYVALKRTGQYKLGSKTGPGQKAILFLPMSAKS</sequence>
<proteinExistence type="evidence at transcript level"/>
<organism>
    <name type="scientific">Pan troglodytes</name>
    <name type="common">Chimpanzee</name>
    <dbReference type="NCBI Taxonomy" id="9598"/>
    <lineage>
        <taxon>Eukaryota</taxon>
        <taxon>Metazoa</taxon>
        <taxon>Chordata</taxon>
        <taxon>Craniata</taxon>
        <taxon>Vertebrata</taxon>
        <taxon>Euteleostomi</taxon>
        <taxon>Mammalia</taxon>
        <taxon>Eutheria</taxon>
        <taxon>Euarchontoglires</taxon>
        <taxon>Primates</taxon>
        <taxon>Haplorrhini</taxon>
        <taxon>Catarrhini</taxon>
        <taxon>Hominidae</taxon>
        <taxon>Pan</taxon>
    </lineage>
</organism>
<accession>Q5IS69</accession>
<comment type="function">
    <text evidence="3">Acts as a ligand for FGFR1, FGFR2, FGFR3 and FGFR4 (By similarity). Also acts as an integrin ligand which is required for FGF2 signaling (By similarity). Binds to integrin ITGAV:ITGB3 (By similarity). Plays an important role in the regulation of cell survival, cell division, cell differentiation and cell migration (By similarity). Functions as a potent mitogen in vitro (By similarity). Can induce angiogenesis (By similarity). Mediates phosphorylation of ERK1/2 and thereby promotes retinal lens fiber differentiation (By similarity).</text>
</comment>
<comment type="subunit">
    <text evidence="3 4 5">Monomer. Homodimer. Interacts with FGFR1, FGFR2, FGFR3 and FGFR4. Affinity between fibroblast growth factors (FGFs) and their receptors is increased by heparan sulfate glycosaminoglycans that function as coreceptors. Interacts with CSPG4, FGFBP1 and TEC. Found in a complex with FGFBP1, FGF1 and FGF2. Interacts with FGFBP3. Interacts with integrin ITGAV:ITGB3; the interaction is required for FGF2 signaling. Interacts with SNORC (via the extracellular domain). Interacts with glypican GPC3.</text>
</comment>
<comment type="subcellular location">
    <subcellularLocation>
        <location evidence="3">Secreted</location>
    </subcellularLocation>
    <subcellularLocation>
        <location evidence="3">Nucleus</location>
    </subcellularLocation>
    <text evidence="3">Exported from cells by an endoplasmic reticulum (ER)/Golgi-independent mechanism (By similarity). Unconventional secretion of FGF2 occurs by direct translocation across the plasma membrane (By similarity). Binding of exogenous FGF2 to FGFR facilitates endocytosis followed by translocation of FGF2 across endosomal membrane into the cytosol (By similarity). Nuclear import from the cytosol requires the classical nuclear import machinery, involving proteins KPNA1 and KPNB1, as well as CEP57 (By similarity).</text>
</comment>
<comment type="PTM">
    <text evidence="1">Phosphorylation at Tyr-215 regulates FGF2 unconventional secretion.</text>
</comment>
<comment type="miscellaneous">
    <text evidence="3">This protein binds heparin more strongly than does aFGF.</text>
</comment>
<comment type="similarity">
    <text evidence="7">Belongs to the heparin-binding growth factors family.</text>
</comment>
<comment type="sequence caution" evidence="9">
    <conflict type="miscellaneous discrepancy">
        <sequence resource="EMBL-CDS" id="AAV74297"/>
    </conflict>
    <text>Unusual initiator. The initiator methionine is coded by a non-canonical CTG leucine codon.</text>
</comment>
<evidence type="ECO:0000250" key="1"/>
<evidence type="ECO:0000250" key="2">
    <source>
        <dbReference type="UniProtKB" id="P05230"/>
    </source>
</evidence>
<evidence type="ECO:0000250" key="3">
    <source>
        <dbReference type="UniProtKB" id="P09038"/>
    </source>
</evidence>
<evidence type="ECO:0000250" key="4">
    <source>
        <dbReference type="UniProtKB" id="P13109"/>
    </source>
</evidence>
<evidence type="ECO:0000250" key="5">
    <source>
        <dbReference type="UniProtKB" id="P15655"/>
    </source>
</evidence>
<evidence type="ECO:0000250" key="6">
    <source>
        <dbReference type="UniProtKB" id="Q60487"/>
    </source>
</evidence>
<evidence type="ECO:0000255" key="7"/>
<evidence type="ECO:0000256" key="8">
    <source>
        <dbReference type="SAM" id="MobiDB-lite"/>
    </source>
</evidence>
<evidence type="ECO:0000305" key="9"/>
<evidence type="ECO:0000312" key="10">
    <source>
        <dbReference type="EMBL" id="AAV74297.1"/>
    </source>
</evidence>
<protein>
    <recommendedName>
        <fullName evidence="10">Fibroblast growth factor 2</fullName>
        <shortName>FGF-2</shortName>
    </recommendedName>
    <alternativeName>
        <fullName evidence="3">Basic fibroblast growth factor</fullName>
        <shortName>bFGF</shortName>
    </alternativeName>
    <alternativeName>
        <fullName evidence="3">Heparin-binding growth factor 2</fullName>
        <shortName evidence="3">HBGF-2</shortName>
    </alternativeName>
</protein>